<reference key="1">
    <citation type="journal article" date="2007" name="Plant Cell">
        <title>Dothideomycete-plant interactions illuminated by genome sequencing and EST analysis of the wheat pathogen Stagonospora nodorum.</title>
        <authorList>
            <person name="Hane J.K."/>
            <person name="Lowe R.G.T."/>
            <person name="Solomon P.S."/>
            <person name="Tan K.-C."/>
            <person name="Schoch C.L."/>
            <person name="Spatafora J.W."/>
            <person name="Crous P.W."/>
            <person name="Kodira C.D."/>
            <person name="Birren B.W."/>
            <person name="Galagan J.E."/>
            <person name="Torriani S.F.F."/>
            <person name="McDonald B.A."/>
            <person name="Oliver R.P."/>
        </authorList>
    </citation>
    <scope>NUCLEOTIDE SEQUENCE [LARGE SCALE GENOMIC DNA]</scope>
    <source>
        <strain>SN15 / ATCC MYA-4574 / FGSC 10173</strain>
    </source>
</reference>
<gene>
    <name type="primary">UTP25</name>
    <name type="ORF">SNOG_04859</name>
</gene>
<dbReference type="EMBL" id="CH445331">
    <property type="protein sequence ID" value="EAT87250.2"/>
    <property type="molecule type" value="Genomic_DNA"/>
</dbReference>
<dbReference type="RefSeq" id="XP_001795272.1">
    <property type="nucleotide sequence ID" value="XM_001795220.1"/>
</dbReference>
<dbReference type="FunCoup" id="Q0UTQ5">
    <property type="interactions" value="1155"/>
</dbReference>
<dbReference type="STRING" id="321614.Q0UTQ5"/>
<dbReference type="EnsemblFungi" id="SNOT_04859">
    <property type="protein sequence ID" value="SNOT_04859"/>
    <property type="gene ID" value="SNOG_04859"/>
</dbReference>
<dbReference type="GeneID" id="5972147"/>
<dbReference type="KEGG" id="pno:SNOG_04859"/>
<dbReference type="VEuPathDB" id="FungiDB:JI435_048590"/>
<dbReference type="eggNOG" id="KOG2340">
    <property type="taxonomic scope" value="Eukaryota"/>
</dbReference>
<dbReference type="HOGENOM" id="CLU_018705_0_1_1"/>
<dbReference type="InParanoid" id="Q0UTQ5"/>
<dbReference type="Proteomes" id="UP000001055">
    <property type="component" value="Unassembled WGS sequence"/>
</dbReference>
<dbReference type="GO" id="GO:0005730">
    <property type="term" value="C:nucleolus"/>
    <property type="evidence" value="ECO:0000318"/>
    <property type="project" value="GO_Central"/>
</dbReference>
<dbReference type="GO" id="GO:0032040">
    <property type="term" value="C:small-subunit processome"/>
    <property type="evidence" value="ECO:0000318"/>
    <property type="project" value="GO_Central"/>
</dbReference>
<dbReference type="GO" id="GO:0019843">
    <property type="term" value="F:rRNA binding"/>
    <property type="evidence" value="ECO:0000318"/>
    <property type="project" value="GO_Central"/>
</dbReference>
<dbReference type="GO" id="GO:0034511">
    <property type="term" value="F:U3 snoRNA binding"/>
    <property type="evidence" value="ECO:0000318"/>
    <property type="project" value="GO_Central"/>
</dbReference>
<dbReference type="GO" id="GO:0000462">
    <property type="term" value="P:maturation of SSU-rRNA from tricistronic rRNA transcript (SSU-rRNA, 5.8S rRNA, LSU-rRNA)"/>
    <property type="evidence" value="ECO:0000318"/>
    <property type="project" value="GO_Central"/>
</dbReference>
<dbReference type="FunFam" id="3.40.50.300:FF:002356">
    <property type="entry name" value="U3 small nucleolar RNA-associated protein 25"/>
    <property type="match status" value="1"/>
</dbReference>
<dbReference type="Gene3D" id="3.40.50.300">
    <property type="entry name" value="P-loop containing nucleotide triphosphate hydrolases"/>
    <property type="match status" value="1"/>
</dbReference>
<dbReference type="InterPro" id="IPR027417">
    <property type="entry name" value="P-loop_NTPase"/>
</dbReference>
<dbReference type="InterPro" id="IPR010678">
    <property type="entry name" value="UTP25"/>
</dbReference>
<dbReference type="InterPro" id="IPR053939">
    <property type="entry name" value="UTP25_C"/>
</dbReference>
<dbReference type="InterPro" id="IPR053940">
    <property type="entry name" value="UTP25_NTPase-like"/>
</dbReference>
<dbReference type="PANTHER" id="PTHR12933">
    <property type="entry name" value="ORF PROTEIN-RELATED"/>
    <property type="match status" value="1"/>
</dbReference>
<dbReference type="PANTHER" id="PTHR12933:SF0">
    <property type="entry name" value="U3 SMALL NUCLEOLAR RNA-ASSOCIATED PROTEIN 25 HOMOLOG"/>
    <property type="match status" value="1"/>
</dbReference>
<dbReference type="Pfam" id="PF06862">
    <property type="entry name" value="Utp25_C"/>
    <property type="match status" value="1"/>
</dbReference>
<dbReference type="Pfam" id="PF22916">
    <property type="entry name" value="UTP25_NTPase-like"/>
    <property type="match status" value="1"/>
</dbReference>
<dbReference type="SUPFAM" id="SSF52540">
    <property type="entry name" value="P-loop containing nucleoside triphosphate hydrolases"/>
    <property type="match status" value="1"/>
</dbReference>
<proteinExistence type="inferred from homology"/>
<keyword id="KW-0539">Nucleus</keyword>
<keyword id="KW-0687">Ribonucleoprotein</keyword>
<keyword id="KW-0690">Ribosome biogenesis</keyword>
<keyword id="KW-0698">rRNA processing</keyword>
<sequence>MQHAPEPGESQSEDSDDSVSDNDDDEEDAQPTSNAYAALLQSLSTVAKQNEHQETHRRKKRKLAGEDLQVAEEPQQKINRNMSNLTEDEPDAVFDGDALDEDPQEDAASDDGVQIRDAVEETQDGFESFEVHFANPDENDLAMRLRRISENQWSAKKLHAAGGRALLQVPCADNTAFDTRKLRSTRDVQLKARLAENAQKVVGQFNDGHEQVIMPSIFGYQDVLFAARTVHNAARMRDITCLHALNHILIGRDRVLKNNAKLAAANDGDDVEYRDQGFTRPKVLFLLETKQACVRVVDSITRLFTFEQQENKKRFLDQFHRPDQAFSDDKPADFRELFEGNDENEFRVGVKLTRKTLKFYSTFYNSDIIFASPLGLRRAIETGDPKKRSGDYDFLSSIEMVIMEQADANLMQNWEHAEFVFEHLNLQPKESHGCDFSRVRPWYLDDNAKHVRQTIVMSAFLTPKINTLWNKHMRNFFGRLKYTPDYSAGVIESLSHGIKGIKQTFWRFESPSHLTDPDARFKYFSSTILPSILRTPKPAEGGPGILMFVPSYLDFTRLRNSLVDVNISYALISEYTDMTDVRKARSHFMNGKHSLLLYSGRAHHFHRFNIRGVKRVVFYGVPENPIFYEELVSMVGKSVERGETSRAEASIRVMFSKWERMELERIVGTKRLSRMVGDKGDVFDFVY</sequence>
<name>UTP25_PHANO</name>
<comment type="function">
    <text evidence="1">DEAD-box RNA helicase-like protein required for pre-18S rRNA processing, specifically at sites A0, A1, and A2.</text>
</comment>
<comment type="subunit">
    <text evidence="1">Component of the ribosomal small subunit (SSU) processome composed of at least 40 protein subunits and snoRNA U3.</text>
</comment>
<comment type="subcellular location">
    <subcellularLocation>
        <location evidence="1">Nucleus</location>
        <location evidence="1">Nucleolus</location>
    </subcellularLocation>
</comment>
<comment type="similarity">
    <text evidence="3">Belongs to the UTP25 family.</text>
</comment>
<feature type="chain" id="PRO_0000408131" description="U3 small nucleolar RNA-associated protein 25">
    <location>
        <begin position="1"/>
        <end position="687"/>
    </location>
</feature>
<feature type="region of interest" description="Disordered" evidence="2">
    <location>
        <begin position="1"/>
        <end position="111"/>
    </location>
</feature>
<feature type="compositionally biased region" description="Acidic residues" evidence="2">
    <location>
        <begin position="11"/>
        <end position="29"/>
    </location>
</feature>
<feature type="compositionally biased region" description="Polar residues" evidence="2">
    <location>
        <begin position="30"/>
        <end position="48"/>
    </location>
</feature>
<feature type="compositionally biased region" description="Polar residues" evidence="2">
    <location>
        <begin position="76"/>
        <end position="85"/>
    </location>
</feature>
<feature type="compositionally biased region" description="Acidic residues" evidence="2">
    <location>
        <begin position="86"/>
        <end position="109"/>
    </location>
</feature>
<accession>Q0UTQ5</accession>
<evidence type="ECO:0000250" key="1"/>
<evidence type="ECO:0000256" key="2">
    <source>
        <dbReference type="SAM" id="MobiDB-lite"/>
    </source>
</evidence>
<evidence type="ECO:0000305" key="3"/>
<protein>
    <recommendedName>
        <fullName>U3 small nucleolar RNA-associated protein 25</fullName>
        <shortName>U3 snoRNA-associated protein 25</shortName>
    </recommendedName>
    <alternativeName>
        <fullName>U three protein 25</fullName>
    </alternativeName>
</protein>
<organism>
    <name type="scientific">Phaeosphaeria nodorum (strain SN15 / ATCC MYA-4574 / FGSC 10173)</name>
    <name type="common">Glume blotch fungus</name>
    <name type="synonym">Parastagonospora nodorum</name>
    <dbReference type="NCBI Taxonomy" id="321614"/>
    <lineage>
        <taxon>Eukaryota</taxon>
        <taxon>Fungi</taxon>
        <taxon>Dikarya</taxon>
        <taxon>Ascomycota</taxon>
        <taxon>Pezizomycotina</taxon>
        <taxon>Dothideomycetes</taxon>
        <taxon>Pleosporomycetidae</taxon>
        <taxon>Pleosporales</taxon>
        <taxon>Pleosporineae</taxon>
        <taxon>Phaeosphaeriaceae</taxon>
        <taxon>Parastagonospora</taxon>
    </lineage>
</organism>